<sequence>MSNFSIISDYKPAGDQPKAIDEIIKGLNNKKRSQMLLGITGSGKTFTMANIIERTNRPTLIMAHNKTLAAQIYSEMKSIFPKNAVEYFVSYYDYYQPEAYIPKTDVFIEKDSSINEQIDLMRHSATRSLLERRDVIVVSSVSCIYGLGSPDLYYQMTVNLEPGKSYPRDKLLNDLVNLQYERNDIGFERGCFRVKGDNVDVFPSHYSDKAWRLSFFGNELEYIHEFDPLTGEKLVKLDKAIIYGNSHFVMPKETVNKAISEIEEELQKRIAFLKSQDKLLETQRINQRTQYDLEMLTETGSCKGVENYSRFFTGRKAGEPPPTLFEYLPKDALLFVDESHVSVPQIRAMYNGDRARKEVLVEHGFRLPSALDNRPLKFEEWDNFRPQTVFVSATPSLFELNETGGEVVELIIRPTGLLDPECIIKPATNQVEDLVGEIQSTIAKGFCVLVTTLTKKMAEDLTNYLQELKYKTSYLHSNVHTLERIEILRDLRQGTIDILVGINLLREGLDIPECGLVAILDADKEGFLRSEVSLIQTIGRAARNSEGRVILYADKMTKSIDKAISETMRRRTIQQEHNEKYGIIPKTINRTIHALAELEKVDSKLDKKQTHNLFENPAKLKAHIDKLRKEMLKAASNLEFEQAAKLRDQLKTLEEAALELS</sequence>
<comment type="function">
    <text evidence="1">The UvrABC repair system catalyzes the recognition and processing of DNA lesions. A damage recognition complex composed of 2 UvrA and 2 UvrB subunits scans DNA for abnormalities. Upon binding of the UvrA(2)B(2) complex to a putative damaged site, the DNA wraps around one UvrB monomer. DNA wrap is dependent on ATP binding by UvrB and probably causes local melting of the DNA helix, facilitating insertion of UvrB beta-hairpin between the DNA strands. Then UvrB probes one DNA strand for the presence of a lesion. If a lesion is found the UvrA subunits dissociate and the UvrB-DNA preincision complex is formed. This complex is subsequently bound by UvrC and the second UvrB is released. If no lesion is found, the DNA wraps around the other UvrB subunit that will check the other stand for damage.</text>
</comment>
<comment type="subunit">
    <text evidence="1">Forms a heterotetramer with UvrA during the search for lesions. Interacts with UvrC in an incision complex.</text>
</comment>
<comment type="subcellular location">
    <subcellularLocation>
        <location evidence="1">Cytoplasm</location>
    </subcellularLocation>
</comment>
<comment type="domain">
    <text evidence="1">The beta-hairpin motif is involved in DNA binding.</text>
</comment>
<comment type="similarity">
    <text evidence="1">Belongs to the UvrB family.</text>
</comment>
<accession>A8GV86</accession>
<feature type="chain" id="PRO_1000077914" description="UvrABC system protein B">
    <location>
        <begin position="1"/>
        <end position="661"/>
    </location>
</feature>
<feature type="domain" description="Helicase ATP-binding" evidence="1">
    <location>
        <begin position="25"/>
        <end position="182"/>
    </location>
</feature>
<feature type="domain" description="Helicase C-terminal" evidence="1">
    <location>
        <begin position="430"/>
        <end position="592"/>
    </location>
</feature>
<feature type="domain" description="UVR" evidence="1">
    <location>
        <begin position="621"/>
        <end position="656"/>
    </location>
</feature>
<feature type="short sequence motif" description="Beta-hairpin">
    <location>
        <begin position="91"/>
        <end position="114"/>
    </location>
</feature>
<feature type="binding site" evidence="1">
    <location>
        <begin position="38"/>
        <end position="45"/>
    </location>
    <ligand>
        <name>ATP</name>
        <dbReference type="ChEBI" id="CHEBI:30616"/>
    </ligand>
</feature>
<protein>
    <recommendedName>
        <fullName evidence="1">UvrABC system protein B</fullName>
        <shortName evidence="1">Protein UvrB</shortName>
    </recommendedName>
    <alternativeName>
        <fullName evidence="1">Excinuclease ABC subunit B</fullName>
    </alternativeName>
</protein>
<reference key="1">
    <citation type="submission" date="2007-09" db="EMBL/GenBank/DDBJ databases">
        <title>Complete genome sequencing of Rickettsia bellii.</title>
        <authorList>
            <person name="Madan A."/>
            <person name="Lee H."/>
            <person name="Madan A."/>
            <person name="Yoon J.-G."/>
            <person name="Ryu G.-Y."/>
            <person name="Dasch G."/>
            <person name="Ereemeva M."/>
        </authorList>
    </citation>
    <scope>NUCLEOTIDE SEQUENCE [LARGE SCALE GENOMIC DNA]</scope>
    <source>
        <strain>OSU 85-389</strain>
    </source>
</reference>
<organism>
    <name type="scientific">Rickettsia bellii (strain OSU 85-389)</name>
    <dbReference type="NCBI Taxonomy" id="391896"/>
    <lineage>
        <taxon>Bacteria</taxon>
        <taxon>Pseudomonadati</taxon>
        <taxon>Pseudomonadota</taxon>
        <taxon>Alphaproteobacteria</taxon>
        <taxon>Rickettsiales</taxon>
        <taxon>Rickettsiaceae</taxon>
        <taxon>Rickettsieae</taxon>
        <taxon>Rickettsia</taxon>
        <taxon>belli group</taxon>
    </lineage>
</organism>
<dbReference type="EMBL" id="CP000849">
    <property type="protein sequence ID" value="ABV78757.1"/>
    <property type="molecule type" value="Genomic_DNA"/>
</dbReference>
<dbReference type="RefSeq" id="WP_012151658.1">
    <property type="nucleotide sequence ID" value="NC_009883.1"/>
</dbReference>
<dbReference type="SMR" id="A8GV86"/>
<dbReference type="KEGG" id="rbo:A1I_01855"/>
<dbReference type="HOGENOM" id="CLU_009621_2_1_5"/>
<dbReference type="GO" id="GO:0005737">
    <property type="term" value="C:cytoplasm"/>
    <property type="evidence" value="ECO:0007669"/>
    <property type="project" value="UniProtKB-SubCell"/>
</dbReference>
<dbReference type="GO" id="GO:0009380">
    <property type="term" value="C:excinuclease repair complex"/>
    <property type="evidence" value="ECO:0007669"/>
    <property type="project" value="InterPro"/>
</dbReference>
<dbReference type="GO" id="GO:0005524">
    <property type="term" value="F:ATP binding"/>
    <property type="evidence" value="ECO:0007669"/>
    <property type="project" value="UniProtKB-UniRule"/>
</dbReference>
<dbReference type="GO" id="GO:0016887">
    <property type="term" value="F:ATP hydrolysis activity"/>
    <property type="evidence" value="ECO:0007669"/>
    <property type="project" value="InterPro"/>
</dbReference>
<dbReference type="GO" id="GO:0003677">
    <property type="term" value="F:DNA binding"/>
    <property type="evidence" value="ECO:0007669"/>
    <property type="project" value="UniProtKB-UniRule"/>
</dbReference>
<dbReference type="GO" id="GO:0009381">
    <property type="term" value="F:excinuclease ABC activity"/>
    <property type="evidence" value="ECO:0007669"/>
    <property type="project" value="UniProtKB-UniRule"/>
</dbReference>
<dbReference type="GO" id="GO:0004386">
    <property type="term" value="F:helicase activity"/>
    <property type="evidence" value="ECO:0007669"/>
    <property type="project" value="UniProtKB-KW"/>
</dbReference>
<dbReference type="GO" id="GO:0006289">
    <property type="term" value="P:nucleotide-excision repair"/>
    <property type="evidence" value="ECO:0007669"/>
    <property type="project" value="UniProtKB-UniRule"/>
</dbReference>
<dbReference type="GO" id="GO:0009432">
    <property type="term" value="P:SOS response"/>
    <property type="evidence" value="ECO:0007669"/>
    <property type="project" value="UniProtKB-UniRule"/>
</dbReference>
<dbReference type="CDD" id="cd17916">
    <property type="entry name" value="DEXHc_UvrB"/>
    <property type="match status" value="1"/>
</dbReference>
<dbReference type="CDD" id="cd18790">
    <property type="entry name" value="SF2_C_UvrB"/>
    <property type="match status" value="1"/>
</dbReference>
<dbReference type="Gene3D" id="3.40.50.300">
    <property type="entry name" value="P-loop containing nucleotide triphosphate hydrolases"/>
    <property type="match status" value="3"/>
</dbReference>
<dbReference type="Gene3D" id="4.10.860.10">
    <property type="entry name" value="UVR domain"/>
    <property type="match status" value="1"/>
</dbReference>
<dbReference type="HAMAP" id="MF_00204">
    <property type="entry name" value="UvrB"/>
    <property type="match status" value="1"/>
</dbReference>
<dbReference type="InterPro" id="IPR006935">
    <property type="entry name" value="Helicase/UvrB_N"/>
</dbReference>
<dbReference type="InterPro" id="IPR014001">
    <property type="entry name" value="Helicase_ATP-bd"/>
</dbReference>
<dbReference type="InterPro" id="IPR001650">
    <property type="entry name" value="Helicase_C-like"/>
</dbReference>
<dbReference type="InterPro" id="IPR027417">
    <property type="entry name" value="P-loop_NTPase"/>
</dbReference>
<dbReference type="InterPro" id="IPR001943">
    <property type="entry name" value="UVR_dom"/>
</dbReference>
<dbReference type="InterPro" id="IPR036876">
    <property type="entry name" value="UVR_dom_sf"/>
</dbReference>
<dbReference type="InterPro" id="IPR004807">
    <property type="entry name" value="UvrB"/>
</dbReference>
<dbReference type="InterPro" id="IPR041471">
    <property type="entry name" value="UvrB_inter"/>
</dbReference>
<dbReference type="InterPro" id="IPR024759">
    <property type="entry name" value="UvrB_YAD/RRR_dom"/>
</dbReference>
<dbReference type="NCBIfam" id="NF003673">
    <property type="entry name" value="PRK05298.1"/>
    <property type="match status" value="1"/>
</dbReference>
<dbReference type="NCBIfam" id="TIGR00631">
    <property type="entry name" value="uvrb"/>
    <property type="match status" value="1"/>
</dbReference>
<dbReference type="PANTHER" id="PTHR24029">
    <property type="entry name" value="UVRABC SYSTEM PROTEIN B"/>
    <property type="match status" value="1"/>
</dbReference>
<dbReference type="PANTHER" id="PTHR24029:SF0">
    <property type="entry name" value="UVRABC SYSTEM PROTEIN B"/>
    <property type="match status" value="1"/>
</dbReference>
<dbReference type="Pfam" id="PF00271">
    <property type="entry name" value="Helicase_C"/>
    <property type="match status" value="1"/>
</dbReference>
<dbReference type="Pfam" id="PF04851">
    <property type="entry name" value="ResIII"/>
    <property type="match status" value="1"/>
</dbReference>
<dbReference type="Pfam" id="PF02151">
    <property type="entry name" value="UVR"/>
    <property type="match status" value="1"/>
</dbReference>
<dbReference type="Pfam" id="PF12344">
    <property type="entry name" value="UvrB"/>
    <property type="match status" value="1"/>
</dbReference>
<dbReference type="Pfam" id="PF17757">
    <property type="entry name" value="UvrB_inter"/>
    <property type="match status" value="1"/>
</dbReference>
<dbReference type="SMART" id="SM00487">
    <property type="entry name" value="DEXDc"/>
    <property type="match status" value="1"/>
</dbReference>
<dbReference type="SMART" id="SM00490">
    <property type="entry name" value="HELICc"/>
    <property type="match status" value="1"/>
</dbReference>
<dbReference type="SUPFAM" id="SSF46600">
    <property type="entry name" value="C-terminal UvrC-binding domain of UvrB"/>
    <property type="match status" value="1"/>
</dbReference>
<dbReference type="SUPFAM" id="SSF52540">
    <property type="entry name" value="P-loop containing nucleoside triphosphate hydrolases"/>
    <property type="match status" value="2"/>
</dbReference>
<dbReference type="PROSITE" id="PS51192">
    <property type="entry name" value="HELICASE_ATP_BIND_1"/>
    <property type="match status" value="1"/>
</dbReference>
<dbReference type="PROSITE" id="PS51194">
    <property type="entry name" value="HELICASE_CTER"/>
    <property type="match status" value="1"/>
</dbReference>
<dbReference type="PROSITE" id="PS50151">
    <property type="entry name" value="UVR"/>
    <property type="match status" value="1"/>
</dbReference>
<proteinExistence type="inferred from homology"/>
<keyword id="KW-0067">ATP-binding</keyword>
<keyword id="KW-0963">Cytoplasm</keyword>
<keyword id="KW-0227">DNA damage</keyword>
<keyword id="KW-0228">DNA excision</keyword>
<keyword id="KW-0234">DNA repair</keyword>
<keyword id="KW-0267">Excision nuclease</keyword>
<keyword id="KW-0347">Helicase</keyword>
<keyword id="KW-0378">Hydrolase</keyword>
<keyword id="KW-0547">Nucleotide-binding</keyword>
<keyword id="KW-0742">SOS response</keyword>
<gene>
    <name evidence="1" type="primary">uvrB</name>
    <name type="ordered locus">A1I_01855</name>
</gene>
<evidence type="ECO:0000255" key="1">
    <source>
        <dbReference type="HAMAP-Rule" id="MF_00204"/>
    </source>
</evidence>
<name>UVRB_RICB8</name>